<evidence type="ECO:0000255" key="1">
    <source>
        <dbReference type="PROSITE-ProRule" id="PRU00267"/>
    </source>
</evidence>
<evidence type="ECO:0000256" key="2">
    <source>
        <dbReference type="SAM" id="MobiDB-lite"/>
    </source>
</evidence>
<evidence type="ECO:0000269" key="3">
    <source>
    </source>
</evidence>
<evidence type="ECO:0000269" key="4">
    <source>
    </source>
</evidence>
<evidence type="ECO:0000269" key="5">
    <source>
    </source>
</evidence>
<evidence type="ECO:0000269" key="6">
    <source>
    </source>
</evidence>
<evidence type="ECO:0000269" key="7">
    <source>
    </source>
</evidence>
<evidence type="ECO:0000303" key="8">
    <source>
    </source>
</evidence>
<evidence type="ECO:0000305" key="9"/>
<evidence type="ECO:0007829" key="10">
    <source>
        <dbReference type="PDB" id="1WXL"/>
    </source>
</evidence>
<feature type="chain" id="PRO_0000048604" description="FACT complex subunit Ssrp1">
    <location>
        <begin position="1"/>
        <end position="723"/>
    </location>
</feature>
<feature type="DNA-binding region" description="HMG box" evidence="1">
    <location>
        <begin position="555"/>
        <end position="621"/>
    </location>
</feature>
<feature type="region of interest" description="Disordered" evidence="2">
    <location>
        <begin position="459"/>
        <end position="564"/>
    </location>
</feature>
<feature type="region of interest" description="Disordered" evidence="2">
    <location>
        <begin position="586"/>
        <end position="723"/>
    </location>
</feature>
<feature type="compositionally biased region" description="Acidic residues" evidence="2">
    <location>
        <begin position="464"/>
        <end position="478"/>
    </location>
</feature>
<feature type="compositionally biased region" description="Acidic residues" evidence="2">
    <location>
        <begin position="486"/>
        <end position="507"/>
    </location>
</feature>
<feature type="compositionally biased region" description="Basic residues" evidence="2">
    <location>
        <begin position="531"/>
        <end position="557"/>
    </location>
</feature>
<feature type="compositionally biased region" description="Basic and acidic residues" evidence="2">
    <location>
        <begin position="586"/>
        <end position="621"/>
    </location>
</feature>
<feature type="compositionally biased region" description="Polar residues" evidence="2">
    <location>
        <begin position="644"/>
        <end position="656"/>
    </location>
</feature>
<feature type="compositionally biased region" description="Acidic residues" evidence="2">
    <location>
        <begin position="664"/>
        <end position="676"/>
    </location>
</feature>
<feature type="compositionally biased region" description="Basic and acidic residues" evidence="2">
    <location>
        <begin position="677"/>
        <end position="692"/>
    </location>
</feature>
<feature type="compositionally biased region" description="Acidic residues" evidence="2">
    <location>
        <begin position="702"/>
        <end position="723"/>
    </location>
</feature>
<feature type="modified residue" description="Phosphoserine" evidence="6 7">
    <location>
        <position position="443"/>
    </location>
</feature>
<feature type="modified residue" description="Phosphoserine" evidence="6">
    <location>
        <position position="628"/>
    </location>
</feature>
<feature type="modified residue" description="Phosphoserine" evidence="7">
    <location>
        <position position="664"/>
    </location>
</feature>
<feature type="modified residue" description="Phosphoserine" evidence="7">
    <location>
        <position position="668"/>
    </location>
</feature>
<feature type="modified residue" description="Phosphothreonine" evidence="7">
    <location>
        <position position="669"/>
    </location>
</feature>
<feature type="modified residue" description="Phosphoserine" evidence="7">
    <location>
        <position position="670"/>
    </location>
</feature>
<feature type="modified residue" description="Phosphoserine" evidence="7">
    <location>
        <position position="671"/>
    </location>
</feature>
<feature type="sequence conflict" description="In Ref. 1; AAA28914." evidence="9" ref="1">
    <original>E</original>
    <variation>Q</variation>
    <location>
        <position position="13"/>
    </location>
</feature>
<feature type="sequence conflict" description="In Ref. 1; AAA28914." evidence="9" ref="1">
    <original>K</original>
    <variation>E</variation>
    <location>
        <position position="33"/>
    </location>
</feature>
<feature type="sequence conflict" description="In Ref. 1; AAA28914." evidence="9" ref="1">
    <original>G</original>
    <variation>R</variation>
    <location>
        <position position="212"/>
    </location>
</feature>
<feature type="sequence conflict" description="In Ref. 1; AAA28914." evidence="9" ref="1">
    <original>M</original>
    <variation>T</variation>
    <location>
        <position position="428"/>
    </location>
</feature>
<feature type="sequence conflict" description="In Ref. 1; AAA28914." evidence="9" ref="1">
    <original>V</original>
    <variation>E</variation>
    <location>
        <position position="498"/>
    </location>
</feature>
<feature type="sequence conflict" description="In Ref. 1; AAA28914." evidence="9" ref="1">
    <original>D</original>
    <variation>E</variation>
    <location>
        <position position="504"/>
    </location>
</feature>
<feature type="sequence conflict" description="In Ref. 1; AAA28914." evidence="9" ref="1">
    <original>I</original>
    <variation>Y</variation>
    <location>
        <position position="573"/>
    </location>
</feature>
<feature type="sequence conflict" description="In Ref. 5; AAO45187." evidence="9" ref="5">
    <original>K</original>
    <variation>T</variation>
    <location>
        <position position="681"/>
    </location>
</feature>
<feature type="helix" evidence="10">
    <location>
        <begin position="561"/>
        <end position="576"/>
    </location>
</feature>
<feature type="helix" evidence="10">
    <location>
        <begin position="582"/>
        <end position="594"/>
    </location>
</feature>
<feature type="helix" evidence="10">
    <location>
        <begin position="599"/>
        <end position="614"/>
    </location>
</feature>
<feature type="turn" evidence="10">
    <location>
        <begin position="615"/>
        <end position="617"/>
    </location>
</feature>
<feature type="helix" evidence="10">
    <location>
        <begin position="618"/>
        <end position="620"/>
    </location>
</feature>
<protein>
    <recommendedName>
        <fullName>FACT complex subunit Ssrp1</fullName>
    </recommendedName>
    <alternativeName>
        <fullName>Chorion-factor 5</fullName>
    </alternativeName>
    <alternativeName>
        <fullName>Facilitates chromatin transcription complex subunit Ssrp1</fullName>
    </alternativeName>
    <alternativeName>
        <fullName>Recombination signal sequence recognition protein</fullName>
    </alternativeName>
    <alternativeName>
        <fullName>Single-strand recognition protein</fullName>
    </alternativeName>
    <alternativeName>
        <fullName>dSSRP1</fullName>
    </alternativeName>
</protein>
<organism>
    <name type="scientific">Drosophila melanogaster</name>
    <name type="common">Fruit fly</name>
    <dbReference type="NCBI Taxonomy" id="7227"/>
    <lineage>
        <taxon>Eukaryota</taxon>
        <taxon>Metazoa</taxon>
        <taxon>Ecdysozoa</taxon>
        <taxon>Arthropoda</taxon>
        <taxon>Hexapoda</taxon>
        <taxon>Insecta</taxon>
        <taxon>Pterygota</taxon>
        <taxon>Neoptera</taxon>
        <taxon>Endopterygota</taxon>
        <taxon>Diptera</taxon>
        <taxon>Brachycera</taxon>
        <taxon>Muscomorpha</taxon>
        <taxon>Ephydroidea</taxon>
        <taxon>Drosophilidae</taxon>
        <taxon>Drosophila</taxon>
        <taxon>Sophophora</taxon>
    </lineage>
</organism>
<proteinExistence type="evidence at protein level"/>
<accession>Q05344</accession>
<accession>Q86NM5</accession>
<accession>Q9W1J4</accession>
<gene>
    <name type="primary">Ssrp</name>
    <name type="synonym">CF5</name>
    <name type="synonym">SSRP1</name>
    <name type="ORF">CG4817</name>
</gene>
<comment type="function">
    <text evidence="4">Component of the FACT complex, a general chromatin factor that acts to reorganize nucleosomes. The FACT complex is involved in multiple processes that require DNA as a template such as mRNA elongation, DNA replication and DNA repair. During transcription elongation the FACT complex acts as a histone chaperone that both destabilizes and restores nucleosomal structure. It facilitates the passage of RNA polymerase II and transcription by promoting the dissociation of one histone H2A-H2B dimer from the nucleosome, then subsequently promotes the reestablishment of the nucleosome following the passage of RNA polymerase II. Binds specifically to single-stranded DNA and RNA with highest affinity for nucleotides G and U. The FACT complex is required for expression of Hox genes.</text>
</comment>
<comment type="subunit">
    <text evidence="3 4">Component of the FACT complex, a stable heterodimer of dre4/spt16 and Ssrp. Interacts with CHD1 and TRL/GAGA.</text>
</comment>
<comment type="subcellular location">
    <subcellularLocation>
        <location evidence="5 8">Nucleus</location>
    </subcellularLocation>
    <subcellularLocation>
        <location evidence="5 8">Chromosome</location>
    </subcellularLocation>
    <subcellularLocation>
        <location evidence="5">Nucleus</location>
        <location evidence="5">Nucleolus</location>
    </subcellularLocation>
    <text evidence="5">Colocalizes with RNA polymerase II on chromatin. Recruited to actively transcribed loci.</text>
</comment>
<comment type="tissue specificity">
    <text>Expressed at highest levels in nurse cells of the ovary.</text>
</comment>
<comment type="developmental stage">
    <text>Abundant throughout oogenesis and embryogenesis, decreases during larval stages and increases again in pupae.</text>
</comment>
<comment type="similarity">
    <text evidence="9">Belongs to the SSRP1 family.</text>
</comment>
<keyword id="KW-0002">3D-structure</keyword>
<keyword id="KW-0158">Chromosome</keyword>
<keyword id="KW-0903">Direct protein sequencing</keyword>
<keyword id="KW-0227">DNA damage</keyword>
<keyword id="KW-0234">DNA repair</keyword>
<keyword id="KW-0235">DNA replication</keyword>
<keyword id="KW-0238">DNA-binding</keyword>
<keyword id="KW-0539">Nucleus</keyword>
<keyword id="KW-0597">Phosphoprotein</keyword>
<keyword id="KW-1185">Reference proteome</keyword>
<keyword id="KW-0694">RNA-binding</keyword>
<keyword id="KW-0804">Transcription</keyword>
<keyword id="KW-0805">Transcription regulation</keyword>
<dbReference type="EMBL" id="L08825">
    <property type="protein sequence ID" value="AAA28914.1"/>
    <property type="molecule type" value="mRNA"/>
</dbReference>
<dbReference type="EMBL" id="X68408">
    <property type="protein sequence ID" value="CAA48471.1"/>
    <property type="molecule type" value="mRNA"/>
</dbReference>
<dbReference type="EMBL" id="AE013599">
    <property type="protein sequence ID" value="AAF47064.1"/>
    <property type="molecule type" value="Genomic_DNA"/>
</dbReference>
<dbReference type="EMBL" id="BT004831">
    <property type="protein sequence ID" value="AAO45187.1"/>
    <property type="molecule type" value="mRNA"/>
</dbReference>
<dbReference type="PIR" id="A48217">
    <property type="entry name" value="A48217"/>
</dbReference>
<dbReference type="PIR" id="S33688">
    <property type="entry name" value="S33688"/>
</dbReference>
<dbReference type="RefSeq" id="NP_523830.2">
    <property type="nucleotide sequence ID" value="NM_079106.3"/>
</dbReference>
<dbReference type="PDB" id="1WXL">
    <property type="method" value="NMR"/>
    <property type="chains" value="A=555-624"/>
</dbReference>
<dbReference type="PDBsum" id="1WXL"/>
<dbReference type="BMRB" id="Q05344"/>
<dbReference type="SMR" id="Q05344"/>
<dbReference type="BioGRID" id="63363">
    <property type="interactions" value="14"/>
</dbReference>
<dbReference type="ComplexPortal" id="CPX-2466">
    <property type="entry name" value="FACT complex"/>
</dbReference>
<dbReference type="FunCoup" id="Q05344">
    <property type="interactions" value="2420"/>
</dbReference>
<dbReference type="IntAct" id="Q05344">
    <property type="interactions" value="88"/>
</dbReference>
<dbReference type="STRING" id="7227.FBpp0072151"/>
<dbReference type="iPTMnet" id="Q05344"/>
<dbReference type="PaxDb" id="7227-FBpp0072151"/>
<dbReference type="DNASU" id="37767"/>
<dbReference type="EnsemblMetazoa" id="FBtr0072242">
    <property type="protein sequence ID" value="FBpp0072151"/>
    <property type="gene ID" value="FBgn0010278"/>
</dbReference>
<dbReference type="GeneID" id="37767"/>
<dbReference type="KEGG" id="dme:Dmel_CG4817"/>
<dbReference type="AGR" id="FB:FBgn0010278"/>
<dbReference type="CTD" id="37767"/>
<dbReference type="FlyBase" id="FBgn0010278">
    <property type="gene designation" value="Ssrp"/>
</dbReference>
<dbReference type="VEuPathDB" id="VectorBase:FBgn0010278"/>
<dbReference type="eggNOG" id="KOG0526">
    <property type="taxonomic scope" value="Eukaryota"/>
</dbReference>
<dbReference type="GeneTree" id="ENSGT00940000167382"/>
<dbReference type="HOGENOM" id="CLU_017374_2_0_1"/>
<dbReference type="InParanoid" id="Q05344"/>
<dbReference type="OMA" id="QVVTKIF"/>
<dbReference type="OrthoDB" id="498543at2759"/>
<dbReference type="PhylomeDB" id="Q05344"/>
<dbReference type="Reactome" id="R-DME-112382">
    <property type="pathway name" value="Formation of RNA Pol II elongation complex"/>
</dbReference>
<dbReference type="Reactome" id="R-DME-674695">
    <property type="pathway name" value="RNA Polymerase II Pre-transcription Events"/>
</dbReference>
<dbReference type="Reactome" id="R-DME-6796648">
    <property type="pathway name" value="TP53 Regulates Transcription of DNA Repair Genes"/>
</dbReference>
<dbReference type="Reactome" id="R-DME-6804756">
    <property type="pathway name" value="Regulation of TP53 Activity through Phosphorylation"/>
</dbReference>
<dbReference type="Reactome" id="R-DME-75955">
    <property type="pathway name" value="RNA Polymerase II Transcription Elongation"/>
</dbReference>
<dbReference type="SignaLink" id="Q05344"/>
<dbReference type="BioGRID-ORCS" id="37767">
    <property type="hits" value="1 hit in 1 CRISPR screen"/>
</dbReference>
<dbReference type="EvolutionaryTrace" id="Q05344"/>
<dbReference type="GenomeRNAi" id="37767"/>
<dbReference type="PRO" id="PR:Q05344"/>
<dbReference type="Proteomes" id="UP000000803">
    <property type="component" value="Chromosome 2R"/>
</dbReference>
<dbReference type="Bgee" id="FBgn0010278">
    <property type="expression patterns" value="Expressed in adult tracheocyte (Drosophila) in open tracheal system trachea and 114 other cell types or tissues"/>
</dbReference>
<dbReference type="ExpressionAtlas" id="Q05344">
    <property type="expression patterns" value="baseline and differential"/>
</dbReference>
<dbReference type="GO" id="GO:0005829">
    <property type="term" value="C:cytosol"/>
    <property type="evidence" value="ECO:0000314"/>
    <property type="project" value="CAFA"/>
</dbReference>
<dbReference type="GO" id="GO:0035101">
    <property type="term" value="C:FACT complex"/>
    <property type="evidence" value="ECO:0000314"/>
    <property type="project" value="FlyBase"/>
</dbReference>
<dbReference type="GO" id="GO:0005730">
    <property type="term" value="C:nucleolus"/>
    <property type="evidence" value="ECO:0000314"/>
    <property type="project" value="FlyBase"/>
</dbReference>
<dbReference type="GO" id="GO:0005634">
    <property type="term" value="C:nucleus"/>
    <property type="evidence" value="ECO:0000314"/>
    <property type="project" value="CAFA"/>
</dbReference>
<dbReference type="GO" id="GO:0070087">
    <property type="term" value="F:chromo shadow domain binding"/>
    <property type="evidence" value="ECO:0000315"/>
    <property type="project" value="CAFA"/>
</dbReference>
<dbReference type="GO" id="GO:0042393">
    <property type="term" value="F:histone binding"/>
    <property type="evidence" value="ECO:0000318"/>
    <property type="project" value="GO_Central"/>
</dbReference>
<dbReference type="GO" id="GO:0031492">
    <property type="term" value="F:nucleosomal DNA binding"/>
    <property type="evidence" value="ECO:0000314"/>
    <property type="project" value="FlyBase"/>
</dbReference>
<dbReference type="GO" id="GO:0031491">
    <property type="term" value="F:nucleosome binding"/>
    <property type="evidence" value="ECO:0000314"/>
    <property type="project" value="FlyBase"/>
</dbReference>
<dbReference type="GO" id="GO:0046982">
    <property type="term" value="F:protein heterodimerization activity"/>
    <property type="evidence" value="ECO:0000353"/>
    <property type="project" value="CAFA"/>
</dbReference>
<dbReference type="GO" id="GO:0003723">
    <property type="term" value="F:RNA binding"/>
    <property type="evidence" value="ECO:0007669"/>
    <property type="project" value="UniProtKB-KW"/>
</dbReference>
<dbReference type="GO" id="GO:0006281">
    <property type="term" value="P:DNA repair"/>
    <property type="evidence" value="ECO:0007669"/>
    <property type="project" value="UniProtKB-KW"/>
</dbReference>
<dbReference type="GO" id="GO:0006260">
    <property type="term" value="P:DNA replication"/>
    <property type="evidence" value="ECO:0007669"/>
    <property type="project" value="UniProtKB-KW"/>
</dbReference>
<dbReference type="GO" id="GO:0030707">
    <property type="term" value="P:follicle cell of egg chamber development"/>
    <property type="evidence" value="ECO:0000315"/>
    <property type="project" value="FlyBase"/>
</dbReference>
<dbReference type="GO" id="GO:0001933">
    <property type="term" value="P:negative regulation of protein phosphorylation"/>
    <property type="evidence" value="ECO:0000315"/>
    <property type="project" value="UniProtKB"/>
</dbReference>
<dbReference type="GO" id="GO:0030838">
    <property type="term" value="P:positive regulation of actin filament polymerization"/>
    <property type="evidence" value="ECO:0000315"/>
    <property type="project" value="UniProtKB"/>
</dbReference>
<dbReference type="GO" id="GO:1902275">
    <property type="term" value="P:regulation of chromatin organization"/>
    <property type="evidence" value="ECO:0000315"/>
    <property type="project" value="FlyBase"/>
</dbReference>
<dbReference type="CDD" id="cd21994">
    <property type="entry name" value="HMG-box_SSRP1-like"/>
    <property type="match status" value="1"/>
</dbReference>
<dbReference type="CDD" id="cd13230">
    <property type="entry name" value="PH1_SSRP1-like"/>
    <property type="match status" value="1"/>
</dbReference>
<dbReference type="CDD" id="cd13231">
    <property type="entry name" value="PH2_SSRP1-like"/>
    <property type="match status" value="1"/>
</dbReference>
<dbReference type="DisProt" id="DP00720"/>
<dbReference type="FunFam" id="2.30.29.220:FF:000001">
    <property type="entry name" value="FACT complex subunit SSRP1"/>
    <property type="match status" value="1"/>
</dbReference>
<dbReference type="FunFam" id="2.30.29.30:FF:000119">
    <property type="entry name" value="FACT complex subunit SSRP1"/>
    <property type="match status" value="1"/>
</dbReference>
<dbReference type="FunFam" id="2.30.29.150:FF:000001">
    <property type="entry name" value="Fact complex subunit ssrp1"/>
    <property type="match status" value="1"/>
</dbReference>
<dbReference type="FunFam" id="2.30.29.30:FF:000098">
    <property type="entry name" value="Fact complex subunit ssrp1"/>
    <property type="match status" value="1"/>
</dbReference>
<dbReference type="FunFam" id="1.10.30.10:FF:000036">
    <property type="entry name" value="high mobility group protein D"/>
    <property type="match status" value="1"/>
</dbReference>
<dbReference type="Gene3D" id="2.30.29.150">
    <property type="match status" value="1"/>
</dbReference>
<dbReference type="Gene3D" id="1.10.30.10">
    <property type="entry name" value="High mobility group box domain"/>
    <property type="match status" value="1"/>
</dbReference>
<dbReference type="Gene3D" id="2.30.29.30">
    <property type="entry name" value="Pleckstrin-homology domain (PH domain)/Phosphotyrosine-binding domain (PTB)"/>
    <property type="match status" value="2"/>
</dbReference>
<dbReference type="Gene3D" id="2.30.29.220">
    <property type="entry name" value="Structure-specific recognition protein (SSRP1)"/>
    <property type="match status" value="1"/>
</dbReference>
<dbReference type="IDEAL" id="IID50086"/>
<dbReference type="InterPro" id="IPR009071">
    <property type="entry name" value="HMG_box_dom"/>
</dbReference>
<dbReference type="InterPro" id="IPR036910">
    <property type="entry name" value="HMG_box_dom_sf"/>
</dbReference>
<dbReference type="InterPro" id="IPR011993">
    <property type="entry name" value="PH-like_dom_sf"/>
</dbReference>
<dbReference type="InterPro" id="IPR013719">
    <property type="entry name" value="RTT106/SPT16-like_middle_dom"/>
</dbReference>
<dbReference type="InterPro" id="IPR050454">
    <property type="entry name" value="RTT106/SSRP1_HistChap/FACT"/>
</dbReference>
<dbReference type="InterPro" id="IPR048993">
    <property type="entry name" value="SSRP1-like_PH1"/>
</dbReference>
<dbReference type="InterPro" id="IPR000969">
    <property type="entry name" value="SSRP1/POB3"/>
</dbReference>
<dbReference type="InterPro" id="IPR035417">
    <property type="entry name" value="SSRP1/POB3_N"/>
</dbReference>
<dbReference type="InterPro" id="IPR024954">
    <property type="entry name" value="SSRP1_DD"/>
</dbReference>
<dbReference type="InterPro" id="IPR038167">
    <property type="entry name" value="SSRP1_sf"/>
</dbReference>
<dbReference type="PANTHER" id="PTHR45849">
    <property type="entry name" value="FACT COMPLEX SUBUNIT SSRP1"/>
    <property type="match status" value="1"/>
</dbReference>
<dbReference type="PANTHER" id="PTHR45849:SF1">
    <property type="entry name" value="FACT COMPLEX SUBUNIT SSRP1"/>
    <property type="match status" value="1"/>
</dbReference>
<dbReference type="Pfam" id="PF00505">
    <property type="entry name" value="HMG_box"/>
    <property type="match status" value="1"/>
</dbReference>
<dbReference type="Pfam" id="PF21103">
    <property type="entry name" value="PH1_SSRP1-like"/>
    <property type="match status" value="1"/>
</dbReference>
<dbReference type="Pfam" id="PF17292">
    <property type="entry name" value="POB3_N"/>
    <property type="match status" value="1"/>
</dbReference>
<dbReference type="Pfam" id="PF08512">
    <property type="entry name" value="Rttp106-like_middle"/>
    <property type="match status" value="1"/>
</dbReference>
<dbReference type="Pfam" id="PF03531">
    <property type="entry name" value="SSrecog"/>
    <property type="match status" value="1"/>
</dbReference>
<dbReference type="PRINTS" id="PR00887">
    <property type="entry name" value="SSRCOGNITION"/>
</dbReference>
<dbReference type="SMART" id="SM00398">
    <property type="entry name" value="HMG"/>
    <property type="match status" value="1"/>
</dbReference>
<dbReference type="SMART" id="SM01287">
    <property type="entry name" value="Rtt106"/>
    <property type="match status" value="1"/>
</dbReference>
<dbReference type="SUPFAM" id="SSF47095">
    <property type="entry name" value="HMG-box"/>
    <property type="match status" value="1"/>
</dbReference>
<dbReference type="SUPFAM" id="SSF50729">
    <property type="entry name" value="PH domain-like"/>
    <property type="match status" value="1"/>
</dbReference>
<dbReference type="PROSITE" id="PS50118">
    <property type="entry name" value="HMG_BOX_2"/>
    <property type="match status" value="1"/>
</dbReference>
<name>SSRP1_DROME</name>
<sequence length="723" mass="81533">MTDSLEYNDINAEVRGVLCSGRLKMTEQNIIFKNTKTGKVEQISAEDIDLINSQKFVGTWGLRVFTKGGVLHRFTGFRDSEHEKLGKFIKAAYSQEMVEKEMCVKGWNWGTARFMGSVLSFDKESKTIFEVPLSHVSQCVTGKNEVTLEFHQNDDAPVGLLEMRFHIPAVESAEEDPVDKFHQNVMSKASVISASGESIAIFREIQILTPRGRYDIKIFSTFFQLHGKTFDYKIPMDSVLRLFMLPHKDSRQMFFVLSLDPPIKQGQTRYHYLVLLFAPDEETTIELPFSEAELRDKYEGKLEKEISGPVYEVMGKVMKVLIGRKITGPGNFIGHSGTAAVGCSFKAAAGYLYPLERGFIYIHKPPLHIRFEEISSVNFARSGGSTRSFDFEVTLKNGTVHIFSSIEKEEYAKLFDYITQKKLHVSNMGKDKSGYKDVDFGDSDNENEPDAYLARLKAEAREKEEDDDDGDSDEESTDEDFKPNENESDVAEEYDSNVESDSDDDSDASGGGGDSDGAKKKKEKKSEKKEKKEKKHKEKERTKKPSKKKKDSGKPKRATTAFMLWLNDTRESIKRENPGIKVTEIAKKGGEMWKELKDKSKWEDAAAKDKQRYHDEMRNYKPEAGGDSDNEKGGKSSKKRKTEPSPSKKANTSGSGFKSKEYISDDDSTSSDDEKDNEPAKKKSKPPSDGDAKKKKAKSESEPEESEEDSNASDEDEEDEASD</sequence>
<reference key="1">
    <citation type="journal article" date="1993" name="Proc. Natl. Acad. Sci. U.S.A.">
        <title>A Drosophila single-strand DNA/RNA-binding factor contains a high-mobility-group box and is enriched in the nucleolus.</title>
        <authorList>
            <person name="Hsu T."/>
            <person name="King D.L."/>
            <person name="Labonne C."/>
            <person name="Kafatos F.C."/>
        </authorList>
    </citation>
    <scope>NUCLEOTIDE SEQUENCE [MRNA]</scope>
    <source>
        <tissue>Ovary</tissue>
    </source>
</reference>
<reference key="2">
    <citation type="journal article" date="1993" name="Nucleic Acids Res.">
        <title>Isolation and characterization of cDNA clones encoding the Drosophila homolog of the HMG-box SSRP family that recognizes specific DNA structures.</title>
        <authorList>
            <person name="Bruhn S.L."/>
            <person name="Housman D.E."/>
            <person name="Lippard S.J."/>
        </authorList>
    </citation>
    <scope>NUCLEOTIDE SEQUENCE [MRNA]</scope>
</reference>
<reference key="3">
    <citation type="journal article" date="2000" name="Science">
        <title>The genome sequence of Drosophila melanogaster.</title>
        <authorList>
            <person name="Adams M.D."/>
            <person name="Celniker S.E."/>
            <person name="Holt R.A."/>
            <person name="Evans C.A."/>
            <person name="Gocayne J.D."/>
            <person name="Amanatides P.G."/>
            <person name="Scherer S.E."/>
            <person name="Li P.W."/>
            <person name="Hoskins R.A."/>
            <person name="Galle R.F."/>
            <person name="George R.A."/>
            <person name="Lewis S.E."/>
            <person name="Richards S."/>
            <person name="Ashburner M."/>
            <person name="Henderson S.N."/>
            <person name="Sutton G.G."/>
            <person name="Wortman J.R."/>
            <person name="Yandell M.D."/>
            <person name="Zhang Q."/>
            <person name="Chen L.X."/>
            <person name="Brandon R.C."/>
            <person name="Rogers Y.-H.C."/>
            <person name="Blazej R.G."/>
            <person name="Champe M."/>
            <person name="Pfeiffer B.D."/>
            <person name="Wan K.H."/>
            <person name="Doyle C."/>
            <person name="Baxter E.G."/>
            <person name="Helt G."/>
            <person name="Nelson C.R."/>
            <person name="Miklos G.L.G."/>
            <person name="Abril J.F."/>
            <person name="Agbayani A."/>
            <person name="An H.-J."/>
            <person name="Andrews-Pfannkoch C."/>
            <person name="Baldwin D."/>
            <person name="Ballew R.M."/>
            <person name="Basu A."/>
            <person name="Baxendale J."/>
            <person name="Bayraktaroglu L."/>
            <person name="Beasley E.M."/>
            <person name="Beeson K.Y."/>
            <person name="Benos P.V."/>
            <person name="Berman B.P."/>
            <person name="Bhandari D."/>
            <person name="Bolshakov S."/>
            <person name="Borkova D."/>
            <person name="Botchan M.R."/>
            <person name="Bouck J."/>
            <person name="Brokstein P."/>
            <person name="Brottier P."/>
            <person name="Burtis K.C."/>
            <person name="Busam D.A."/>
            <person name="Butler H."/>
            <person name="Cadieu E."/>
            <person name="Center A."/>
            <person name="Chandra I."/>
            <person name="Cherry J.M."/>
            <person name="Cawley S."/>
            <person name="Dahlke C."/>
            <person name="Davenport L.B."/>
            <person name="Davies P."/>
            <person name="de Pablos B."/>
            <person name="Delcher A."/>
            <person name="Deng Z."/>
            <person name="Mays A.D."/>
            <person name="Dew I."/>
            <person name="Dietz S.M."/>
            <person name="Dodson K."/>
            <person name="Doup L.E."/>
            <person name="Downes M."/>
            <person name="Dugan-Rocha S."/>
            <person name="Dunkov B.C."/>
            <person name="Dunn P."/>
            <person name="Durbin K.J."/>
            <person name="Evangelista C.C."/>
            <person name="Ferraz C."/>
            <person name="Ferriera S."/>
            <person name="Fleischmann W."/>
            <person name="Fosler C."/>
            <person name="Gabrielian A.E."/>
            <person name="Garg N.S."/>
            <person name="Gelbart W.M."/>
            <person name="Glasser K."/>
            <person name="Glodek A."/>
            <person name="Gong F."/>
            <person name="Gorrell J.H."/>
            <person name="Gu Z."/>
            <person name="Guan P."/>
            <person name="Harris M."/>
            <person name="Harris N.L."/>
            <person name="Harvey D.A."/>
            <person name="Heiman T.J."/>
            <person name="Hernandez J.R."/>
            <person name="Houck J."/>
            <person name="Hostin D."/>
            <person name="Houston K.A."/>
            <person name="Howland T.J."/>
            <person name="Wei M.-H."/>
            <person name="Ibegwam C."/>
            <person name="Jalali M."/>
            <person name="Kalush F."/>
            <person name="Karpen G.H."/>
            <person name="Ke Z."/>
            <person name="Kennison J.A."/>
            <person name="Ketchum K.A."/>
            <person name="Kimmel B.E."/>
            <person name="Kodira C.D."/>
            <person name="Kraft C.L."/>
            <person name="Kravitz S."/>
            <person name="Kulp D."/>
            <person name="Lai Z."/>
            <person name="Lasko P."/>
            <person name="Lei Y."/>
            <person name="Levitsky A.A."/>
            <person name="Li J.H."/>
            <person name="Li Z."/>
            <person name="Liang Y."/>
            <person name="Lin X."/>
            <person name="Liu X."/>
            <person name="Mattei B."/>
            <person name="McIntosh T.C."/>
            <person name="McLeod M.P."/>
            <person name="McPherson D."/>
            <person name="Merkulov G."/>
            <person name="Milshina N.V."/>
            <person name="Mobarry C."/>
            <person name="Morris J."/>
            <person name="Moshrefi A."/>
            <person name="Mount S.M."/>
            <person name="Moy M."/>
            <person name="Murphy B."/>
            <person name="Murphy L."/>
            <person name="Muzny D.M."/>
            <person name="Nelson D.L."/>
            <person name="Nelson D.R."/>
            <person name="Nelson K.A."/>
            <person name="Nixon K."/>
            <person name="Nusskern D.R."/>
            <person name="Pacleb J.M."/>
            <person name="Palazzolo M."/>
            <person name="Pittman G.S."/>
            <person name="Pan S."/>
            <person name="Pollard J."/>
            <person name="Puri V."/>
            <person name="Reese M.G."/>
            <person name="Reinert K."/>
            <person name="Remington K."/>
            <person name="Saunders R.D.C."/>
            <person name="Scheeler F."/>
            <person name="Shen H."/>
            <person name="Shue B.C."/>
            <person name="Siden-Kiamos I."/>
            <person name="Simpson M."/>
            <person name="Skupski M.P."/>
            <person name="Smith T.J."/>
            <person name="Spier E."/>
            <person name="Spradling A.C."/>
            <person name="Stapleton M."/>
            <person name="Strong R."/>
            <person name="Sun E."/>
            <person name="Svirskas R."/>
            <person name="Tector C."/>
            <person name="Turner R."/>
            <person name="Venter E."/>
            <person name="Wang A.H."/>
            <person name="Wang X."/>
            <person name="Wang Z.-Y."/>
            <person name="Wassarman D.A."/>
            <person name="Weinstock G.M."/>
            <person name="Weissenbach J."/>
            <person name="Williams S.M."/>
            <person name="Woodage T."/>
            <person name="Worley K.C."/>
            <person name="Wu D."/>
            <person name="Yang S."/>
            <person name="Yao Q.A."/>
            <person name="Ye J."/>
            <person name="Yeh R.-F."/>
            <person name="Zaveri J.S."/>
            <person name="Zhan M."/>
            <person name="Zhang G."/>
            <person name="Zhao Q."/>
            <person name="Zheng L."/>
            <person name="Zheng X.H."/>
            <person name="Zhong F.N."/>
            <person name="Zhong W."/>
            <person name="Zhou X."/>
            <person name="Zhu S.C."/>
            <person name="Zhu X."/>
            <person name="Smith H.O."/>
            <person name="Gibbs R.A."/>
            <person name="Myers E.W."/>
            <person name="Rubin G.M."/>
            <person name="Venter J.C."/>
        </authorList>
    </citation>
    <scope>NUCLEOTIDE SEQUENCE [LARGE SCALE GENOMIC DNA]</scope>
    <source>
        <strain>Berkeley</strain>
    </source>
</reference>
<reference key="4">
    <citation type="journal article" date="2002" name="Genome Biol.">
        <title>Annotation of the Drosophila melanogaster euchromatic genome: a systematic review.</title>
        <authorList>
            <person name="Misra S."/>
            <person name="Crosby M.A."/>
            <person name="Mungall C.J."/>
            <person name="Matthews B.B."/>
            <person name="Campbell K.S."/>
            <person name="Hradecky P."/>
            <person name="Huang Y."/>
            <person name="Kaminker J.S."/>
            <person name="Millburn G.H."/>
            <person name="Prochnik S.E."/>
            <person name="Smith C.D."/>
            <person name="Tupy J.L."/>
            <person name="Whitfield E.J."/>
            <person name="Bayraktaroglu L."/>
            <person name="Berman B.P."/>
            <person name="Bettencourt B.R."/>
            <person name="Celniker S.E."/>
            <person name="de Grey A.D.N.J."/>
            <person name="Drysdale R.A."/>
            <person name="Harris N.L."/>
            <person name="Richter J."/>
            <person name="Russo S."/>
            <person name="Schroeder A.J."/>
            <person name="Shu S.Q."/>
            <person name="Stapleton M."/>
            <person name="Yamada C."/>
            <person name="Ashburner M."/>
            <person name="Gelbart W.M."/>
            <person name="Rubin G.M."/>
            <person name="Lewis S.E."/>
        </authorList>
    </citation>
    <scope>GENOME REANNOTATION</scope>
    <source>
        <strain>Berkeley</strain>
    </source>
</reference>
<reference key="5">
    <citation type="submission" date="2003-02" db="EMBL/GenBank/DDBJ databases">
        <authorList>
            <person name="Stapleton M."/>
            <person name="Brokstein P."/>
            <person name="Hong L."/>
            <person name="Agbayani A."/>
            <person name="Carlson J.W."/>
            <person name="Champe M."/>
            <person name="Chavez C."/>
            <person name="Dorsett V."/>
            <person name="Dresnek D."/>
            <person name="Farfan D."/>
            <person name="Frise E."/>
            <person name="George R.A."/>
            <person name="Gonzalez M."/>
            <person name="Guarin H."/>
            <person name="Kronmiller B."/>
            <person name="Li P.W."/>
            <person name="Liao G."/>
            <person name="Miranda A."/>
            <person name="Mungall C.J."/>
            <person name="Nunoo J."/>
            <person name="Pacleb J.M."/>
            <person name="Paragas V."/>
            <person name="Park S."/>
            <person name="Patel S."/>
            <person name="Phouanenavong S."/>
            <person name="Wan K.H."/>
            <person name="Yu C."/>
            <person name="Lewis S.E."/>
            <person name="Rubin G.M."/>
            <person name="Celniker S.E."/>
        </authorList>
    </citation>
    <scope>NUCLEOTIDE SEQUENCE [LARGE SCALE MRNA]</scope>
    <source>
        <strain>Berkeley</strain>
        <tissue>Embryo</tissue>
    </source>
</reference>
<reference key="6">
    <citation type="journal article" date="2003" name="Genes Dev.">
        <title>Drosophila FACT contributes to Hox gene expression through physical and functional interactions with GAGA factor.</title>
        <authorList>
            <person name="Shimojima T."/>
            <person name="Okada M."/>
            <person name="Nakayama T."/>
            <person name="Ueda H."/>
            <person name="Okawa K."/>
            <person name="Iwamatsu A."/>
            <person name="Handa H."/>
            <person name="Hirose S."/>
        </authorList>
    </citation>
    <scope>PROTEIN SEQUENCE OF 68-74; 305-309; 326-334 AND 414-420</scope>
    <scope>FUNCTION</scope>
    <scope>INTERACTION WITH DRE4 AND TRL</scope>
</reference>
<reference key="7">
    <citation type="journal article" date="1999" name="Chromosoma">
        <title>CHD1 interacts with SSRP1 and depends on both its chromodomain and its ATPase/helicase-like domain for proper association with chromatin.</title>
        <authorList>
            <person name="Kelley D.E."/>
            <person name="Stokes D.G."/>
            <person name="Perry R.P."/>
        </authorList>
    </citation>
    <scope>SUBCELLULAR LOCATION</scope>
    <scope>INTERACTION WITH CHD1</scope>
</reference>
<reference key="8">
    <citation type="journal article" date="2003" name="Science">
        <title>Tracking FACT and the RNA polymerase II elongation complex through chromatin in vivo.</title>
        <authorList>
            <person name="Saunders A."/>
            <person name="Werner J."/>
            <person name="Andrulis E.D."/>
            <person name="Nakayama T."/>
            <person name="Hirose S."/>
            <person name="Reinberg D."/>
            <person name="Lis J.T."/>
        </authorList>
    </citation>
    <scope>SUBCELLULAR LOCATION</scope>
</reference>
<reference key="9">
    <citation type="journal article" date="2007" name="Mol. Biosyst.">
        <title>An integrated chemical, mass spectrometric and computational strategy for (quantitative) phosphoproteomics: application to Drosophila melanogaster Kc167 cells.</title>
        <authorList>
            <person name="Bodenmiller B."/>
            <person name="Mueller L.N."/>
            <person name="Pedrioli P.G.A."/>
            <person name="Pflieger D."/>
            <person name="Juenger M.A."/>
            <person name="Eng J.K."/>
            <person name="Aebersold R."/>
            <person name="Tao W.A."/>
        </authorList>
    </citation>
    <scope>PHOSPHORYLATION [LARGE SCALE ANALYSIS] AT SER-443 AND SER-628</scope>
    <scope>IDENTIFICATION BY MASS SPECTROMETRY</scope>
</reference>
<reference key="10">
    <citation type="journal article" date="2008" name="J. Proteome Res.">
        <title>Phosphoproteome analysis of Drosophila melanogaster embryos.</title>
        <authorList>
            <person name="Zhai B."/>
            <person name="Villen J."/>
            <person name="Beausoleil S.A."/>
            <person name="Mintseris J."/>
            <person name="Gygi S.P."/>
        </authorList>
    </citation>
    <scope>PHOSPHORYLATION [LARGE SCALE ANALYSIS] AT SER-443; SER-664; SER-668; THR-669; SER-670 AND SER-671</scope>
    <scope>IDENTIFICATION BY MASS SPECTROMETRY</scope>
    <source>
        <tissue>Embryo</tissue>
    </source>
</reference>
<reference key="11">
    <citation type="journal article" date="2005" name="J. Biomol. NMR">
        <title>Solution structure of the HMG-box domain in the SSRP1 subunit of FACT.</title>
        <authorList>
            <person name="Kasai N."/>
            <person name="Tsunaka Y."/>
            <person name="Ohki I."/>
            <person name="Hirose S."/>
            <person name="Morikawa K."/>
            <person name="Tate S."/>
        </authorList>
    </citation>
    <scope>STRUCTURE BY NMR OF 555-624</scope>
</reference>